<reference key="1">
    <citation type="journal article" date="2003" name="Genome Res.">
        <title>Genome sequence of an M3 strain of Streptococcus pyogenes reveals a large-scale genomic rearrangement in invasive strains and new insights into phage evolution.</title>
        <authorList>
            <person name="Nakagawa I."/>
            <person name="Kurokawa K."/>
            <person name="Yamashita A."/>
            <person name="Nakata M."/>
            <person name="Tomiyasu Y."/>
            <person name="Okahashi N."/>
            <person name="Kawabata S."/>
            <person name="Yamazaki K."/>
            <person name="Shiba T."/>
            <person name="Yasunaga T."/>
            <person name="Hayashi H."/>
            <person name="Hattori M."/>
            <person name="Hamada S."/>
        </authorList>
    </citation>
    <scope>NUCLEOTIDE SEQUENCE [LARGE SCALE GENOMIC DNA]</scope>
    <source>
        <strain>SSI-1</strain>
    </source>
</reference>
<organism>
    <name type="scientific">Streptococcus pyogenes serotype M3 (strain SSI-1)</name>
    <dbReference type="NCBI Taxonomy" id="193567"/>
    <lineage>
        <taxon>Bacteria</taxon>
        <taxon>Bacillati</taxon>
        <taxon>Bacillota</taxon>
        <taxon>Bacilli</taxon>
        <taxon>Lactobacillales</taxon>
        <taxon>Streptococcaceae</taxon>
        <taxon>Streptococcus</taxon>
    </lineage>
</organism>
<gene>
    <name evidence="1" type="primary">purA</name>
    <name type="ordered locus">SPs0127</name>
</gene>
<name>PURA_STRPQ</name>
<feature type="chain" id="PRO_0000411467" description="Adenylosuccinate synthetase">
    <location>
        <begin position="1"/>
        <end position="430"/>
    </location>
</feature>
<feature type="active site" description="Proton acceptor" evidence="1">
    <location>
        <position position="13"/>
    </location>
</feature>
<feature type="active site" description="Proton donor" evidence="1">
    <location>
        <position position="41"/>
    </location>
</feature>
<feature type="binding site" evidence="1">
    <location>
        <begin position="12"/>
        <end position="18"/>
    </location>
    <ligand>
        <name>GTP</name>
        <dbReference type="ChEBI" id="CHEBI:37565"/>
    </ligand>
</feature>
<feature type="binding site" description="in other chain" evidence="1">
    <location>
        <begin position="13"/>
        <end position="16"/>
    </location>
    <ligand>
        <name>IMP</name>
        <dbReference type="ChEBI" id="CHEBI:58053"/>
        <note>ligand shared between dimeric partners</note>
    </ligand>
</feature>
<feature type="binding site" evidence="1">
    <location>
        <position position="13"/>
    </location>
    <ligand>
        <name>Mg(2+)</name>
        <dbReference type="ChEBI" id="CHEBI:18420"/>
    </ligand>
</feature>
<feature type="binding site" description="in other chain" evidence="1">
    <location>
        <begin position="38"/>
        <end position="41"/>
    </location>
    <ligand>
        <name>IMP</name>
        <dbReference type="ChEBI" id="CHEBI:58053"/>
        <note>ligand shared between dimeric partners</note>
    </ligand>
</feature>
<feature type="binding site" evidence="1">
    <location>
        <begin position="40"/>
        <end position="42"/>
    </location>
    <ligand>
        <name>GTP</name>
        <dbReference type="ChEBI" id="CHEBI:37565"/>
    </ligand>
</feature>
<feature type="binding site" evidence="1">
    <location>
        <position position="40"/>
    </location>
    <ligand>
        <name>Mg(2+)</name>
        <dbReference type="ChEBI" id="CHEBI:18420"/>
    </ligand>
</feature>
<feature type="binding site" description="in other chain" evidence="1">
    <location>
        <position position="128"/>
    </location>
    <ligand>
        <name>IMP</name>
        <dbReference type="ChEBI" id="CHEBI:58053"/>
        <note>ligand shared between dimeric partners</note>
    </ligand>
</feature>
<feature type="binding site" evidence="1">
    <location>
        <position position="142"/>
    </location>
    <ligand>
        <name>IMP</name>
        <dbReference type="ChEBI" id="CHEBI:58053"/>
        <note>ligand shared between dimeric partners</note>
    </ligand>
</feature>
<feature type="binding site" description="in other chain" evidence="1">
    <location>
        <position position="223"/>
    </location>
    <ligand>
        <name>IMP</name>
        <dbReference type="ChEBI" id="CHEBI:58053"/>
        <note>ligand shared between dimeric partners</note>
    </ligand>
</feature>
<feature type="binding site" description="in other chain" evidence="1">
    <location>
        <position position="238"/>
    </location>
    <ligand>
        <name>IMP</name>
        <dbReference type="ChEBI" id="CHEBI:58053"/>
        <note>ligand shared between dimeric partners</note>
    </ligand>
</feature>
<feature type="binding site" evidence="1">
    <location>
        <begin position="298"/>
        <end position="304"/>
    </location>
    <ligand>
        <name>substrate</name>
    </ligand>
</feature>
<feature type="binding site" description="in other chain" evidence="1">
    <location>
        <position position="302"/>
    </location>
    <ligand>
        <name>IMP</name>
        <dbReference type="ChEBI" id="CHEBI:58053"/>
        <note>ligand shared between dimeric partners</note>
    </ligand>
</feature>
<feature type="binding site" evidence="1">
    <location>
        <position position="304"/>
    </location>
    <ligand>
        <name>GTP</name>
        <dbReference type="ChEBI" id="CHEBI:37565"/>
    </ligand>
</feature>
<feature type="binding site" evidence="1">
    <location>
        <begin position="330"/>
        <end position="332"/>
    </location>
    <ligand>
        <name>GTP</name>
        <dbReference type="ChEBI" id="CHEBI:37565"/>
    </ligand>
</feature>
<feature type="binding site" evidence="1">
    <location>
        <begin position="412"/>
        <end position="414"/>
    </location>
    <ligand>
        <name>GTP</name>
        <dbReference type="ChEBI" id="CHEBI:37565"/>
    </ligand>
</feature>
<evidence type="ECO:0000255" key="1">
    <source>
        <dbReference type="HAMAP-Rule" id="MF_00011"/>
    </source>
</evidence>
<accession>P0DD55</accession>
<accession>Q8K8S7</accession>
<proteinExistence type="inferred from homology"/>
<protein>
    <recommendedName>
        <fullName evidence="1">Adenylosuccinate synthetase</fullName>
        <shortName evidence="1">AMPSase</shortName>
        <shortName evidence="1">AdSS</shortName>
        <ecNumber evidence="1">6.3.4.4</ecNumber>
    </recommendedName>
    <alternativeName>
        <fullName evidence="1">IMP--aspartate ligase</fullName>
    </alternativeName>
</protein>
<comment type="function">
    <text evidence="1">Plays an important role in the de novo pathway of purine nucleotide biosynthesis. Catalyzes the first committed step in the biosynthesis of AMP from IMP.</text>
</comment>
<comment type="catalytic activity">
    <reaction evidence="1">
        <text>IMP + L-aspartate + GTP = N(6)-(1,2-dicarboxyethyl)-AMP + GDP + phosphate + 2 H(+)</text>
        <dbReference type="Rhea" id="RHEA:15753"/>
        <dbReference type="ChEBI" id="CHEBI:15378"/>
        <dbReference type="ChEBI" id="CHEBI:29991"/>
        <dbReference type="ChEBI" id="CHEBI:37565"/>
        <dbReference type="ChEBI" id="CHEBI:43474"/>
        <dbReference type="ChEBI" id="CHEBI:57567"/>
        <dbReference type="ChEBI" id="CHEBI:58053"/>
        <dbReference type="ChEBI" id="CHEBI:58189"/>
        <dbReference type="EC" id="6.3.4.4"/>
    </reaction>
</comment>
<comment type="cofactor">
    <cofactor evidence="1">
        <name>Mg(2+)</name>
        <dbReference type="ChEBI" id="CHEBI:18420"/>
    </cofactor>
    <text evidence="1">Binds 1 Mg(2+) ion per subunit.</text>
</comment>
<comment type="pathway">
    <text evidence="1">Purine metabolism; AMP biosynthesis via de novo pathway; AMP from IMP: step 1/2.</text>
</comment>
<comment type="subunit">
    <text evidence="1">Homodimer.</text>
</comment>
<comment type="subcellular location">
    <subcellularLocation>
        <location evidence="1">Cytoplasm</location>
    </subcellularLocation>
</comment>
<comment type="similarity">
    <text evidence="1">Belongs to the adenylosuccinate synthetase family.</text>
</comment>
<keyword id="KW-0963">Cytoplasm</keyword>
<keyword id="KW-0342">GTP-binding</keyword>
<keyword id="KW-0436">Ligase</keyword>
<keyword id="KW-0460">Magnesium</keyword>
<keyword id="KW-0479">Metal-binding</keyword>
<keyword id="KW-0547">Nucleotide-binding</keyword>
<keyword id="KW-0658">Purine biosynthesis</keyword>
<sequence length="430" mass="47407">MTSVVVVGTQWGDEGKGKITDFLSADAEVIARYQGGDNAGHTIVIDGKKFKLHLIPSGIFFPQKISVIGNGVVVNPKSLVKELAYLHDEGVTTDNLRISDRAHVILPYHIQLDQLQEDAKGDNKIGTTIKGIGPAYMDKAARVGIRIADLLDKDIFAERLRINLAEKNRLFEKMYNSTPLDFDAIFEEYYAYGQEIKQYVTDTSVILNDALDAGKRVLFEGAQGVMLDIDQGTYPFVTSSNPVAGGVTIGSGVGPSKINKVVGVCKAYTSRVGDGPFPTELFDEVGERIREVGHEYGTTTGRPRRVGWFDSVVMRHSRRVSGITNLSLNSIDVLSGLDTVKICVAYDLDGKRIDYYPASLEQLKRCKPIYEELPGWQEDITGVRSLDELPENARNYVRRVGELVGVRISTFSVGPGREQTNILESVWASI</sequence>
<dbReference type="EC" id="6.3.4.4" evidence="1"/>
<dbReference type="EMBL" id="BA000034">
    <property type="protein sequence ID" value="BAC63222.1"/>
    <property type="molecule type" value="Genomic_DNA"/>
</dbReference>
<dbReference type="RefSeq" id="WP_011054138.1">
    <property type="nucleotide sequence ID" value="NC_004606.1"/>
</dbReference>
<dbReference type="SMR" id="P0DD55"/>
<dbReference type="KEGG" id="sps:SPs0127"/>
<dbReference type="HOGENOM" id="CLU_029848_0_0_9"/>
<dbReference type="UniPathway" id="UPA00075">
    <property type="reaction ID" value="UER00335"/>
</dbReference>
<dbReference type="GO" id="GO:0005737">
    <property type="term" value="C:cytoplasm"/>
    <property type="evidence" value="ECO:0007669"/>
    <property type="project" value="UniProtKB-SubCell"/>
</dbReference>
<dbReference type="GO" id="GO:0004019">
    <property type="term" value="F:adenylosuccinate synthase activity"/>
    <property type="evidence" value="ECO:0007669"/>
    <property type="project" value="UniProtKB-UniRule"/>
</dbReference>
<dbReference type="GO" id="GO:0005525">
    <property type="term" value="F:GTP binding"/>
    <property type="evidence" value="ECO:0007669"/>
    <property type="project" value="UniProtKB-UniRule"/>
</dbReference>
<dbReference type="GO" id="GO:0000287">
    <property type="term" value="F:magnesium ion binding"/>
    <property type="evidence" value="ECO:0007669"/>
    <property type="project" value="UniProtKB-UniRule"/>
</dbReference>
<dbReference type="GO" id="GO:0044208">
    <property type="term" value="P:'de novo' AMP biosynthetic process"/>
    <property type="evidence" value="ECO:0007669"/>
    <property type="project" value="UniProtKB-UniRule"/>
</dbReference>
<dbReference type="GO" id="GO:0046040">
    <property type="term" value="P:IMP metabolic process"/>
    <property type="evidence" value="ECO:0007669"/>
    <property type="project" value="TreeGrafter"/>
</dbReference>
<dbReference type="CDD" id="cd03108">
    <property type="entry name" value="AdSS"/>
    <property type="match status" value="1"/>
</dbReference>
<dbReference type="FunFam" id="1.10.300.10:FF:000001">
    <property type="entry name" value="Adenylosuccinate synthetase"/>
    <property type="match status" value="1"/>
</dbReference>
<dbReference type="FunFam" id="3.90.170.10:FF:000001">
    <property type="entry name" value="Adenylosuccinate synthetase"/>
    <property type="match status" value="1"/>
</dbReference>
<dbReference type="Gene3D" id="3.40.440.10">
    <property type="entry name" value="Adenylosuccinate Synthetase, subunit A, domain 1"/>
    <property type="match status" value="1"/>
</dbReference>
<dbReference type="Gene3D" id="1.10.300.10">
    <property type="entry name" value="Adenylosuccinate Synthetase, subunit A, domain 2"/>
    <property type="match status" value="1"/>
</dbReference>
<dbReference type="Gene3D" id="3.90.170.10">
    <property type="entry name" value="Adenylosuccinate Synthetase, subunit A, domain 3"/>
    <property type="match status" value="1"/>
</dbReference>
<dbReference type="HAMAP" id="MF_00011">
    <property type="entry name" value="Adenylosucc_synth"/>
    <property type="match status" value="1"/>
</dbReference>
<dbReference type="InterPro" id="IPR018220">
    <property type="entry name" value="Adenylosuccin_syn_GTP-bd"/>
</dbReference>
<dbReference type="InterPro" id="IPR033128">
    <property type="entry name" value="Adenylosuccin_syn_Lys_AS"/>
</dbReference>
<dbReference type="InterPro" id="IPR042109">
    <property type="entry name" value="Adenylosuccinate_synth_dom1"/>
</dbReference>
<dbReference type="InterPro" id="IPR042110">
    <property type="entry name" value="Adenylosuccinate_synth_dom2"/>
</dbReference>
<dbReference type="InterPro" id="IPR042111">
    <property type="entry name" value="Adenylosuccinate_synth_dom3"/>
</dbReference>
<dbReference type="InterPro" id="IPR001114">
    <property type="entry name" value="Adenylosuccinate_synthetase"/>
</dbReference>
<dbReference type="InterPro" id="IPR027417">
    <property type="entry name" value="P-loop_NTPase"/>
</dbReference>
<dbReference type="NCBIfam" id="NF002223">
    <property type="entry name" value="PRK01117.1"/>
    <property type="match status" value="1"/>
</dbReference>
<dbReference type="NCBIfam" id="TIGR00184">
    <property type="entry name" value="purA"/>
    <property type="match status" value="1"/>
</dbReference>
<dbReference type="PANTHER" id="PTHR11846">
    <property type="entry name" value="ADENYLOSUCCINATE SYNTHETASE"/>
    <property type="match status" value="1"/>
</dbReference>
<dbReference type="PANTHER" id="PTHR11846:SF0">
    <property type="entry name" value="ADENYLOSUCCINATE SYNTHETASE"/>
    <property type="match status" value="1"/>
</dbReference>
<dbReference type="Pfam" id="PF00709">
    <property type="entry name" value="Adenylsucc_synt"/>
    <property type="match status" value="1"/>
</dbReference>
<dbReference type="SMART" id="SM00788">
    <property type="entry name" value="Adenylsucc_synt"/>
    <property type="match status" value="1"/>
</dbReference>
<dbReference type="SUPFAM" id="SSF52540">
    <property type="entry name" value="P-loop containing nucleoside triphosphate hydrolases"/>
    <property type="match status" value="1"/>
</dbReference>
<dbReference type="PROSITE" id="PS01266">
    <property type="entry name" value="ADENYLOSUCCIN_SYN_1"/>
    <property type="match status" value="1"/>
</dbReference>
<dbReference type="PROSITE" id="PS00513">
    <property type="entry name" value="ADENYLOSUCCIN_SYN_2"/>
    <property type="match status" value="1"/>
</dbReference>